<protein>
    <recommendedName>
        <fullName>Peptide chain release factor RF3</fullName>
        <shortName>RF-3</shortName>
    </recommendedName>
</protein>
<feature type="initiator methionine" description="Removed" evidence="2 3 4">
    <location>
        <position position="1"/>
    </location>
</feature>
<feature type="chain" id="PRO_0000210938" description="Peptide chain release factor RF3">
    <location>
        <begin position="2"/>
        <end position="529"/>
    </location>
</feature>
<feature type="domain" description="tr-type G">
    <location>
        <begin position="11"/>
        <end position="280"/>
    </location>
</feature>
<feature type="binding site" evidence="1">
    <location>
        <begin position="20"/>
        <end position="27"/>
    </location>
    <ligand>
        <name>GTP</name>
        <dbReference type="ChEBI" id="CHEBI:37565"/>
    </ligand>
</feature>
<feature type="binding site" evidence="1">
    <location>
        <begin position="88"/>
        <end position="92"/>
    </location>
    <ligand>
        <name>GTP</name>
        <dbReference type="ChEBI" id="CHEBI:37565"/>
    </ligand>
</feature>
<feature type="binding site" evidence="1">
    <location>
        <begin position="142"/>
        <end position="145"/>
    </location>
    <ligand>
        <name>GTP</name>
        <dbReference type="ChEBI" id="CHEBI:37565"/>
    </ligand>
</feature>
<feature type="sequence conflict" description="In Ref. 2; CAA81223." evidence="5" ref="2">
    <original>V</original>
    <variation>L</variation>
    <location>
        <position position="315"/>
    </location>
</feature>
<feature type="helix" evidence="6">
    <location>
        <begin position="6"/>
        <end position="11"/>
    </location>
</feature>
<feature type="strand" evidence="6">
    <location>
        <begin position="13"/>
        <end position="20"/>
    </location>
</feature>
<feature type="helix" evidence="6">
    <location>
        <begin position="26"/>
        <end position="35"/>
    </location>
</feature>
<feature type="strand" evidence="6">
    <location>
        <begin position="74"/>
        <end position="79"/>
    </location>
</feature>
<feature type="strand" evidence="6">
    <location>
        <begin position="82"/>
        <end position="87"/>
    </location>
</feature>
<feature type="helix" evidence="6">
    <location>
        <begin position="97"/>
        <end position="101"/>
    </location>
</feature>
<feature type="helix" evidence="6">
    <location>
        <begin position="102"/>
        <end position="105"/>
    </location>
</feature>
<feature type="strand" evidence="6">
    <location>
        <begin position="107"/>
        <end position="114"/>
    </location>
</feature>
<feature type="turn" evidence="6">
    <location>
        <begin position="115"/>
        <end position="117"/>
    </location>
</feature>
<feature type="helix" evidence="6">
    <location>
        <begin position="121"/>
        <end position="130"/>
    </location>
</feature>
<feature type="turn" evidence="6">
    <location>
        <begin position="131"/>
        <end position="134"/>
    </location>
</feature>
<feature type="strand" evidence="6">
    <location>
        <begin position="137"/>
        <end position="142"/>
    </location>
</feature>
<feature type="helix" evidence="6">
    <location>
        <begin position="151"/>
        <end position="162"/>
    </location>
</feature>
<feature type="strand" evidence="6">
    <location>
        <begin position="165"/>
        <end position="174"/>
    </location>
</feature>
<feature type="helix" evidence="6">
    <location>
        <begin position="176"/>
        <end position="178"/>
    </location>
</feature>
<feature type="strand" evidence="6">
    <location>
        <begin position="181"/>
        <end position="184"/>
    </location>
</feature>
<feature type="turn" evidence="6">
    <location>
        <begin position="185"/>
        <end position="188"/>
    </location>
</feature>
<feature type="strand" evidence="6">
    <location>
        <begin position="189"/>
        <end position="192"/>
    </location>
</feature>
<feature type="helix" evidence="6">
    <location>
        <begin position="213"/>
        <end position="219"/>
    </location>
</feature>
<feature type="helix" evidence="6">
    <location>
        <begin position="221"/>
        <end position="237"/>
    </location>
</feature>
<feature type="helix" evidence="6">
    <location>
        <begin position="243"/>
        <end position="247"/>
    </location>
</feature>
<feature type="strand" evidence="6">
    <location>
        <begin position="250"/>
        <end position="256"/>
    </location>
</feature>
<feature type="turn" evidence="6">
    <location>
        <begin position="259"/>
        <end position="262"/>
    </location>
</feature>
<feature type="helix" evidence="6">
    <location>
        <begin position="265"/>
        <end position="275"/>
    </location>
</feature>
<feature type="strand" evidence="6">
    <location>
        <begin position="282"/>
        <end position="286"/>
    </location>
</feature>
<feature type="strand" evidence="6">
    <location>
        <begin position="297"/>
        <end position="303"/>
    </location>
</feature>
<feature type="strand" evidence="6">
    <location>
        <begin position="309"/>
        <end position="312"/>
    </location>
</feature>
<feature type="strand" evidence="6">
    <location>
        <begin position="316"/>
        <end position="323"/>
    </location>
</feature>
<feature type="strand" evidence="6">
    <location>
        <begin position="330"/>
        <end position="333"/>
    </location>
</feature>
<feature type="turn" evidence="6">
    <location>
        <begin position="334"/>
        <end position="336"/>
    </location>
</feature>
<feature type="strand" evidence="6">
    <location>
        <begin position="339"/>
        <end position="341"/>
    </location>
</feature>
<feature type="strand" evidence="6">
    <location>
        <begin position="364"/>
        <end position="367"/>
    </location>
</feature>
<feature type="strand" evidence="6">
    <location>
        <begin position="378"/>
        <end position="382"/>
    </location>
</feature>
<feature type="strand" evidence="6">
    <location>
        <begin position="391"/>
        <end position="393"/>
    </location>
</feature>
<feature type="strand" evidence="6">
    <location>
        <begin position="396"/>
        <end position="404"/>
    </location>
</feature>
<feature type="helix" evidence="6">
    <location>
        <begin position="412"/>
        <end position="421"/>
    </location>
</feature>
<feature type="strand" evidence="6">
    <location>
        <begin position="426"/>
        <end position="430"/>
    </location>
</feature>
<feature type="strand" evidence="6">
    <location>
        <begin position="436"/>
        <end position="442"/>
    </location>
</feature>
<feature type="helix" evidence="6">
    <location>
        <begin position="444"/>
        <end position="456"/>
    </location>
</feature>
<feature type="strand" evidence="6">
    <location>
        <begin position="461"/>
        <end position="464"/>
    </location>
</feature>
<feature type="strand" evidence="6">
    <location>
        <begin position="469"/>
        <end position="475"/>
    </location>
</feature>
<feature type="helix" evidence="6">
    <location>
        <begin position="479"/>
        <end position="488"/>
    </location>
</feature>
<feature type="helix" evidence="6">
    <location>
        <begin position="490"/>
        <end position="492"/>
    </location>
</feature>
<feature type="strand" evidence="6">
    <location>
        <begin position="493"/>
        <end position="495"/>
    </location>
</feature>
<feature type="strand" evidence="6">
    <location>
        <begin position="501"/>
        <end position="507"/>
    </location>
</feature>
<feature type="helix" evidence="6">
    <location>
        <begin position="508"/>
        <end position="517"/>
    </location>
</feature>
<feature type="strand" evidence="6">
    <location>
        <begin position="521"/>
        <end position="528"/>
    </location>
</feature>
<evidence type="ECO:0000250" key="1"/>
<evidence type="ECO:0000269" key="2">
    <source>
    </source>
</evidence>
<evidence type="ECO:0000269" key="3">
    <source>
    </source>
</evidence>
<evidence type="ECO:0000269" key="4">
    <source>
    </source>
</evidence>
<evidence type="ECO:0000305" key="5"/>
<evidence type="ECO:0007829" key="6">
    <source>
        <dbReference type="PDB" id="2H5E"/>
    </source>
</evidence>
<reference key="1">
    <citation type="journal article" date="1994" name="Proc. Natl. Acad. Sci. U.S.A.">
        <title>Identification of the prfC gene, which encodes peptide-chain-release factor 3 of Escherichia coli.</title>
        <authorList>
            <person name="Mikuni O."/>
            <person name="Ito K."/>
            <person name="Mofatt J."/>
            <person name="Matsumura K."/>
            <person name="McCaughan K."/>
            <person name="Nobukuni T."/>
            <person name="Tate W."/>
            <person name="Nakamura Y."/>
        </authorList>
    </citation>
    <scope>NUCLEOTIDE SEQUENCE [GENOMIC DNA]</scope>
    <scope>PROTEIN SEQUENCE OF 2-10</scope>
    <source>
        <strain>K12</strain>
    </source>
</reference>
<reference key="2">
    <citation type="journal article" date="1994" name="Proc. Natl. Acad. Sci. U.S.A.">
        <title>Localization and characterization of the gene encoding release factor RF3 in Escherichia coli.</title>
        <authorList>
            <person name="Grentzmann G."/>
            <person name="Brechemier-Baey D."/>
            <person name="Heurgue V."/>
            <person name="Mora L."/>
            <person name="Buckingham R.H."/>
        </authorList>
    </citation>
    <scope>NUCLEOTIDE SEQUENCE [GENOMIC DNA]</scope>
    <scope>PROTEIN SEQUENCE OF 2-13</scope>
    <source>
        <strain>K12 / W3110 / ATCC 27325 / DSM 5911</strain>
    </source>
</reference>
<reference key="3">
    <citation type="journal article" date="1995" name="Nucleic Acids Res.">
        <title>Analysis of the Escherichia coli genome VI: DNA sequence of the region from 92.8 through 100 minutes.</title>
        <authorList>
            <person name="Burland V.D."/>
            <person name="Plunkett G. III"/>
            <person name="Sofia H.J."/>
            <person name="Daniels D.L."/>
            <person name="Blattner F.R."/>
        </authorList>
    </citation>
    <scope>NUCLEOTIDE SEQUENCE [LARGE SCALE GENOMIC DNA]</scope>
    <source>
        <strain>K12 / MG1655 / ATCC 47076</strain>
    </source>
</reference>
<reference key="4">
    <citation type="journal article" date="1997" name="Science">
        <title>The complete genome sequence of Escherichia coli K-12.</title>
        <authorList>
            <person name="Blattner F.R."/>
            <person name="Plunkett G. III"/>
            <person name="Bloch C.A."/>
            <person name="Perna N.T."/>
            <person name="Burland V."/>
            <person name="Riley M."/>
            <person name="Collado-Vides J."/>
            <person name="Glasner J.D."/>
            <person name="Rode C.K."/>
            <person name="Mayhew G.F."/>
            <person name="Gregor J."/>
            <person name="Davis N.W."/>
            <person name="Kirkpatrick H.A."/>
            <person name="Goeden M.A."/>
            <person name="Rose D.J."/>
            <person name="Mau B."/>
            <person name="Shao Y."/>
        </authorList>
    </citation>
    <scope>NUCLEOTIDE SEQUENCE [LARGE SCALE GENOMIC DNA]</scope>
    <source>
        <strain>K12 / MG1655 / ATCC 47076</strain>
    </source>
</reference>
<reference key="5">
    <citation type="journal article" date="2006" name="Mol. Syst. Biol.">
        <title>Highly accurate genome sequences of Escherichia coli K-12 strains MG1655 and W3110.</title>
        <authorList>
            <person name="Hayashi K."/>
            <person name="Morooka N."/>
            <person name="Yamamoto Y."/>
            <person name="Fujita K."/>
            <person name="Isono K."/>
            <person name="Choi S."/>
            <person name="Ohtsubo E."/>
            <person name="Baba T."/>
            <person name="Wanner B.L."/>
            <person name="Mori H."/>
            <person name="Horiuchi T."/>
        </authorList>
    </citation>
    <scope>NUCLEOTIDE SEQUENCE [LARGE SCALE GENOMIC DNA]</scope>
    <source>
        <strain>K12 / W3110 / ATCC 27325 / DSM 5911</strain>
    </source>
</reference>
<reference key="6">
    <citation type="journal article" date="1995" name="Eur. J. Biochem.">
        <title>Osmo-expression and fast two-step purification of Escherichia coli translation termination factor RF-3.</title>
        <authorList>
            <person name="Mortensen K.K."/>
            <person name="Hansen H.F."/>
            <person name="Grentzmann G."/>
            <person name="Buckingham R.H."/>
            <person name="Sperling-Petersen H.U."/>
        </authorList>
    </citation>
    <scope>PROTEIN SEQUENCE OF 2-19</scope>
</reference>
<reference key="7">
    <citation type="journal article" date="1995" name="J. Biol. Chem.">
        <title>Function of polypeptide chain release factor RF-3 in Escherichia coli. RF-3 action in termination is predominantly at UGA-containing stop signals.</title>
        <authorList>
            <person name="Grentzmann G."/>
            <person name="Brechemier-Baey D."/>
            <person name="Heurgue-Hamard V."/>
            <person name="Buckingham R.H."/>
        </authorList>
    </citation>
    <scope>CHARACTERIZATION</scope>
</reference>
<accession>P0A7I4</accession>
<accession>P33998</accession>
<accession>Q2M5U3</accession>
<sequence>MTLSPYLQEVAKRRTFAIISHPDAGKTTITEKVLLFGQAIQTAGTVKGRGSNQHAKSDWMEMEKQRGISITTSVMQFPYHDCLVNLLDTPGHEDFSEDTYRTLTAVDCCLMVIDAAKGVEDRTRKLMEVTRLRDTPILTFMNKLDRDIRDPMELLDEVENELKIGCAPITWPIGCGKLFKGVYHLYKDETYLYQSGKGHTIQEVRIVKGLNNPDLDAAVGEDLAQQLRDELELVKGASNEFDKELFLAGEITPVFFGTALGNFGVDHMLDGLVEWAPAPMPRQTDTRTVEASEDKFTGFVFKIQANMDPKHRDRVAFMRVVSGKYEKGMKLRQVRTAKDVVISDALTFMAGDRSHVEEAYPGDILGLHNHGTIQIGDTFTQGEMMKFTGIPNFAPELFRRIRLKDPLKQKQLLKGLVQLSEEGAVQVFRPISNNDLIVGAVGVLQFDVVVARLKSEYNVEAVYESVNVATARWVECADAKKFEEFKRKNESQLALDGGDNLAYIATSMVNLRLAQERYPDVQFHQTREH</sequence>
<gene>
    <name type="primary">prfC</name>
    <name type="synonym">miaD</name>
    <name type="synonym">tos</name>
    <name type="ordered locus">b4375</name>
    <name type="ordered locus">JW5873</name>
</gene>
<name>RF3_ECOLI</name>
<comment type="function">
    <text>Increases the formation of ribosomal termination complexes and stimulates activities of RF-1 and RF-2. It binds guanine nucleotides and has strong preference for UGA stop codons. It may interact directly with the ribosome. The stimulation of RF-1 and RF-2 is significantly reduced by GTP and GDP, but not by GMP.</text>
</comment>
<comment type="interaction">
    <interactant intactId="EBI-556252">
        <id>P0A7I4</id>
    </interactant>
    <interactant intactId="EBI-554405">
        <id>P0A796</id>
        <label>pfkA</label>
    </interactant>
    <organismsDiffer>false</organismsDiffer>
    <experiments>2</experiments>
</comment>
<comment type="subcellular location">
    <subcellularLocation>
        <location>Cytoplasm</location>
    </subcellularLocation>
</comment>
<comment type="similarity">
    <text evidence="5">Belongs to the TRAFAC class translation factor GTPase superfamily. Classic translation factor GTPase family. PrfC subfamily.</text>
</comment>
<proteinExistence type="evidence at protein level"/>
<dbReference type="EMBL" id="D17724">
    <property type="protein sequence ID" value="BAA04578.1"/>
    <property type="molecule type" value="Genomic_DNA"/>
</dbReference>
<dbReference type="EMBL" id="Z26313">
    <property type="protein sequence ID" value="CAA81223.1"/>
    <property type="molecule type" value="Genomic_DNA"/>
</dbReference>
<dbReference type="EMBL" id="U14003">
    <property type="protein sequence ID" value="AAA97271.1"/>
    <property type="molecule type" value="Genomic_DNA"/>
</dbReference>
<dbReference type="EMBL" id="U00096">
    <property type="protein sequence ID" value="AAC77328.1"/>
    <property type="molecule type" value="Genomic_DNA"/>
</dbReference>
<dbReference type="EMBL" id="AP009048">
    <property type="protein sequence ID" value="BAE78363.1"/>
    <property type="molecule type" value="Genomic_DNA"/>
</dbReference>
<dbReference type="PIR" id="I59305">
    <property type="entry name" value="I59305"/>
</dbReference>
<dbReference type="RefSeq" id="NP_418792.1">
    <property type="nucleotide sequence ID" value="NC_000913.3"/>
</dbReference>
<dbReference type="RefSeq" id="WP_000175940.1">
    <property type="nucleotide sequence ID" value="NZ_SSUV01000012.1"/>
</dbReference>
<dbReference type="PDB" id="2H5E">
    <property type="method" value="X-ray"/>
    <property type="resolution" value="2.80 A"/>
    <property type="chains" value="A/B=1-529"/>
</dbReference>
<dbReference type="PDB" id="2O0F">
    <property type="method" value="EM"/>
    <property type="resolution" value="15.50 A"/>
    <property type="chains" value="A=1-529"/>
</dbReference>
<dbReference type="PDB" id="4V85">
    <property type="method" value="X-ray"/>
    <property type="resolution" value="3.20 A"/>
    <property type="chains" value="AW=1-529"/>
</dbReference>
<dbReference type="PDB" id="4V89">
    <property type="method" value="X-ray"/>
    <property type="resolution" value="3.70 A"/>
    <property type="chains" value="AW=1-529"/>
</dbReference>
<dbReference type="PDB" id="4V8O">
    <property type="method" value="X-ray"/>
    <property type="resolution" value="3.80 A"/>
    <property type="chains" value="AY=1-529"/>
</dbReference>
<dbReference type="PDB" id="6GWT">
    <property type="method" value="EM"/>
    <property type="resolution" value="3.80 A"/>
    <property type="chains" value="w=3-527"/>
</dbReference>
<dbReference type="PDB" id="6GXM">
    <property type="method" value="EM"/>
    <property type="resolution" value="3.80 A"/>
    <property type="chains" value="w=1-529"/>
</dbReference>
<dbReference type="PDB" id="6GXN">
    <property type="method" value="EM"/>
    <property type="resolution" value="3.90 A"/>
    <property type="chains" value="w=1-529"/>
</dbReference>
<dbReference type="PDB" id="6GXO">
    <property type="method" value="EM"/>
    <property type="resolution" value="3.90 A"/>
    <property type="chains" value="w=1-529"/>
</dbReference>
<dbReference type="PDB" id="6GXP">
    <property type="method" value="EM"/>
    <property type="resolution" value="4.40 A"/>
    <property type="chains" value="w=1-529"/>
</dbReference>
<dbReference type="PDB" id="7M5D">
    <property type="method" value="EM"/>
    <property type="resolution" value="2.80 A"/>
    <property type="chains" value="7=3-527"/>
</dbReference>
<dbReference type="PDB" id="8FZD">
    <property type="method" value="EM"/>
    <property type="resolution" value="3.10 A"/>
    <property type="chains" value="v=1-529"/>
</dbReference>
<dbReference type="PDB" id="8FZF">
    <property type="method" value="EM"/>
    <property type="resolution" value="3.20 A"/>
    <property type="chains" value="v=1-529"/>
</dbReference>
<dbReference type="PDB" id="8FZG">
    <property type="method" value="EM"/>
    <property type="resolution" value="3.10 A"/>
    <property type="chains" value="v=1-529"/>
</dbReference>
<dbReference type="PDB" id="8FZI">
    <property type="method" value="EM"/>
    <property type="resolution" value="3.10 A"/>
    <property type="chains" value="v=1-529"/>
</dbReference>
<dbReference type="PDB" id="8FZJ">
    <property type="method" value="EM"/>
    <property type="resolution" value="3.00 A"/>
    <property type="chains" value="v=1-529"/>
</dbReference>
<dbReference type="PDBsum" id="2H5E"/>
<dbReference type="PDBsum" id="2O0F"/>
<dbReference type="PDBsum" id="4V85"/>
<dbReference type="PDBsum" id="4V89"/>
<dbReference type="PDBsum" id="4V8O"/>
<dbReference type="PDBsum" id="6GWT"/>
<dbReference type="PDBsum" id="6GXM"/>
<dbReference type="PDBsum" id="6GXN"/>
<dbReference type="PDBsum" id="6GXO"/>
<dbReference type="PDBsum" id="6GXP"/>
<dbReference type="PDBsum" id="7M5D"/>
<dbReference type="PDBsum" id="8FZD"/>
<dbReference type="PDBsum" id="8FZF"/>
<dbReference type="PDBsum" id="8FZG"/>
<dbReference type="PDBsum" id="8FZI"/>
<dbReference type="PDBsum" id="8FZJ"/>
<dbReference type="EMDB" id="EMD-0076"/>
<dbReference type="EMDB" id="EMD-0080"/>
<dbReference type="EMDB" id="EMD-0081"/>
<dbReference type="EMDB" id="EMD-0082"/>
<dbReference type="EMDB" id="EMD-0083"/>
<dbReference type="EMDB" id="EMD-1302"/>
<dbReference type="EMDB" id="EMD-29620"/>
<dbReference type="EMDB" id="EMD-29624"/>
<dbReference type="EMDB" id="EMD-29627"/>
<dbReference type="EMDB" id="EMD-29631"/>
<dbReference type="SMR" id="P0A7I4"/>
<dbReference type="BioGRID" id="4260996">
    <property type="interactions" value="58"/>
</dbReference>
<dbReference type="BioGRID" id="853174">
    <property type="interactions" value="1"/>
</dbReference>
<dbReference type="DIP" id="DIP-39402N"/>
<dbReference type="FunCoup" id="P0A7I4">
    <property type="interactions" value="294"/>
</dbReference>
<dbReference type="IntAct" id="P0A7I4">
    <property type="interactions" value="5"/>
</dbReference>
<dbReference type="STRING" id="511145.b4375"/>
<dbReference type="jPOST" id="P0A7I4"/>
<dbReference type="PaxDb" id="511145-b4375"/>
<dbReference type="EnsemblBacteria" id="AAC77328">
    <property type="protein sequence ID" value="AAC77328"/>
    <property type="gene ID" value="b4375"/>
</dbReference>
<dbReference type="GeneID" id="948897"/>
<dbReference type="KEGG" id="ecj:JW5873"/>
<dbReference type="KEGG" id="eco:b4375"/>
<dbReference type="KEGG" id="ecoc:C3026_23635"/>
<dbReference type="PATRIC" id="fig|1411691.4.peg.2313"/>
<dbReference type="EchoBASE" id="EB2037"/>
<dbReference type="eggNOG" id="COG4108">
    <property type="taxonomic scope" value="Bacteria"/>
</dbReference>
<dbReference type="HOGENOM" id="CLU_002794_2_1_6"/>
<dbReference type="InParanoid" id="P0A7I4"/>
<dbReference type="OMA" id="GFVFKIH"/>
<dbReference type="OrthoDB" id="9801472at2"/>
<dbReference type="PhylomeDB" id="P0A7I4"/>
<dbReference type="BioCyc" id="EcoCyc:EG12114-MONOMER"/>
<dbReference type="EvolutionaryTrace" id="P0A7I4"/>
<dbReference type="PRO" id="PR:P0A7I4"/>
<dbReference type="Proteomes" id="UP000000625">
    <property type="component" value="Chromosome"/>
</dbReference>
<dbReference type="GO" id="GO:0005829">
    <property type="term" value="C:cytosol"/>
    <property type="evidence" value="ECO:0000314"/>
    <property type="project" value="EcoCyc"/>
</dbReference>
<dbReference type="GO" id="GO:0019003">
    <property type="term" value="F:GDP binding"/>
    <property type="evidence" value="ECO:0000314"/>
    <property type="project" value="EcoCyc"/>
</dbReference>
<dbReference type="GO" id="GO:0005525">
    <property type="term" value="F:GTP binding"/>
    <property type="evidence" value="ECO:0000314"/>
    <property type="project" value="EcoCyc"/>
</dbReference>
<dbReference type="GO" id="GO:0003924">
    <property type="term" value="F:GTPase activity"/>
    <property type="evidence" value="ECO:0000314"/>
    <property type="project" value="EcoCyc"/>
</dbReference>
<dbReference type="GO" id="GO:0097216">
    <property type="term" value="F:guanosine tetraphosphate binding"/>
    <property type="evidence" value="ECO:0000314"/>
    <property type="project" value="EcoCyc"/>
</dbReference>
<dbReference type="GO" id="GO:0016150">
    <property type="term" value="F:translation release factor activity, codon nonspecific"/>
    <property type="evidence" value="ECO:0000314"/>
    <property type="project" value="EcoCyc"/>
</dbReference>
<dbReference type="GO" id="GO:0016149">
    <property type="term" value="F:translation release factor activity, codon specific"/>
    <property type="evidence" value="ECO:0007669"/>
    <property type="project" value="UniProtKB-UniRule"/>
</dbReference>
<dbReference type="GO" id="GO:1990145">
    <property type="term" value="P:maintenance of translational fidelity"/>
    <property type="evidence" value="ECO:0000315"/>
    <property type="project" value="EcoCyc"/>
</dbReference>
<dbReference type="GO" id="GO:0006449">
    <property type="term" value="P:regulation of translational termination"/>
    <property type="evidence" value="ECO:0007669"/>
    <property type="project" value="UniProtKB-UniRule"/>
</dbReference>
<dbReference type="GO" id="GO:0006415">
    <property type="term" value="P:translational termination"/>
    <property type="evidence" value="ECO:0000314"/>
    <property type="project" value="EcoCyc"/>
</dbReference>
<dbReference type="CDD" id="cd04169">
    <property type="entry name" value="RF3"/>
    <property type="match status" value="1"/>
</dbReference>
<dbReference type="CDD" id="cd03689">
    <property type="entry name" value="RF3_II"/>
    <property type="match status" value="1"/>
</dbReference>
<dbReference type="CDD" id="cd16259">
    <property type="entry name" value="RF3_III"/>
    <property type="match status" value="1"/>
</dbReference>
<dbReference type="FunFam" id="2.40.30.10:FF:000040">
    <property type="entry name" value="Peptide chain release factor 3"/>
    <property type="match status" value="1"/>
</dbReference>
<dbReference type="FunFam" id="3.30.70.3280:FF:000001">
    <property type="entry name" value="Peptide chain release factor 3"/>
    <property type="match status" value="1"/>
</dbReference>
<dbReference type="FunFam" id="3.40.50.300:FF:000184">
    <property type="entry name" value="Peptide chain release factor 3"/>
    <property type="match status" value="1"/>
</dbReference>
<dbReference type="FunFam" id="3.40.50.300:FF:000253">
    <property type="entry name" value="Peptide chain release factor 3"/>
    <property type="match status" value="1"/>
</dbReference>
<dbReference type="Gene3D" id="3.40.50.300">
    <property type="entry name" value="P-loop containing nucleotide triphosphate hydrolases"/>
    <property type="match status" value="3"/>
</dbReference>
<dbReference type="Gene3D" id="3.30.70.3280">
    <property type="entry name" value="Peptide chain release factor 3, domain III"/>
    <property type="match status" value="1"/>
</dbReference>
<dbReference type="HAMAP" id="MF_00072">
    <property type="entry name" value="Rel_fac_3"/>
    <property type="match status" value="1"/>
</dbReference>
<dbReference type="InterPro" id="IPR053905">
    <property type="entry name" value="EF-G-like_DII"/>
</dbReference>
<dbReference type="InterPro" id="IPR035647">
    <property type="entry name" value="EFG_III/V"/>
</dbReference>
<dbReference type="InterPro" id="IPR031157">
    <property type="entry name" value="G_TR_CS"/>
</dbReference>
<dbReference type="InterPro" id="IPR027417">
    <property type="entry name" value="P-loop_NTPase"/>
</dbReference>
<dbReference type="InterPro" id="IPR004548">
    <property type="entry name" value="PrfC"/>
</dbReference>
<dbReference type="InterPro" id="IPR032090">
    <property type="entry name" value="RF3_C"/>
</dbReference>
<dbReference type="InterPro" id="IPR038467">
    <property type="entry name" value="RF3_dom_3_sf"/>
</dbReference>
<dbReference type="InterPro" id="IPR041732">
    <property type="entry name" value="RF3_GTP-bd"/>
</dbReference>
<dbReference type="InterPro" id="IPR005225">
    <property type="entry name" value="Small_GTP-bd"/>
</dbReference>
<dbReference type="InterPro" id="IPR000795">
    <property type="entry name" value="T_Tr_GTP-bd_dom"/>
</dbReference>
<dbReference type="InterPro" id="IPR009000">
    <property type="entry name" value="Transl_B-barrel_sf"/>
</dbReference>
<dbReference type="NCBIfam" id="TIGR00503">
    <property type="entry name" value="prfC"/>
    <property type="match status" value="1"/>
</dbReference>
<dbReference type="NCBIfam" id="NF001964">
    <property type="entry name" value="PRK00741.1"/>
    <property type="match status" value="1"/>
</dbReference>
<dbReference type="NCBIfam" id="TIGR00231">
    <property type="entry name" value="small_GTP"/>
    <property type="match status" value="1"/>
</dbReference>
<dbReference type="PANTHER" id="PTHR43556">
    <property type="entry name" value="PEPTIDE CHAIN RELEASE FACTOR RF3"/>
    <property type="match status" value="1"/>
</dbReference>
<dbReference type="PANTHER" id="PTHR43556:SF2">
    <property type="entry name" value="PEPTIDE CHAIN RELEASE FACTOR RF3"/>
    <property type="match status" value="1"/>
</dbReference>
<dbReference type="Pfam" id="PF22042">
    <property type="entry name" value="EF-G_D2"/>
    <property type="match status" value="1"/>
</dbReference>
<dbReference type="Pfam" id="PF00009">
    <property type="entry name" value="GTP_EFTU"/>
    <property type="match status" value="1"/>
</dbReference>
<dbReference type="Pfam" id="PF16658">
    <property type="entry name" value="RF3_C"/>
    <property type="match status" value="1"/>
</dbReference>
<dbReference type="PRINTS" id="PR00315">
    <property type="entry name" value="ELONGATNFCT"/>
</dbReference>
<dbReference type="SUPFAM" id="SSF54980">
    <property type="entry name" value="EF-G C-terminal domain-like"/>
    <property type="match status" value="1"/>
</dbReference>
<dbReference type="SUPFAM" id="SSF52540">
    <property type="entry name" value="P-loop containing nucleoside triphosphate hydrolases"/>
    <property type="match status" value="1"/>
</dbReference>
<dbReference type="SUPFAM" id="SSF50447">
    <property type="entry name" value="Translation proteins"/>
    <property type="match status" value="1"/>
</dbReference>
<dbReference type="PROSITE" id="PS00301">
    <property type="entry name" value="G_TR_1"/>
    <property type="match status" value="1"/>
</dbReference>
<dbReference type="PROSITE" id="PS51722">
    <property type="entry name" value="G_TR_2"/>
    <property type="match status" value="1"/>
</dbReference>
<keyword id="KW-0002">3D-structure</keyword>
<keyword id="KW-0963">Cytoplasm</keyword>
<keyword id="KW-0903">Direct protein sequencing</keyword>
<keyword id="KW-0342">GTP-binding</keyword>
<keyword id="KW-0547">Nucleotide-binding</keyword>
<keyword id="KW-0648">Protein biosynthesis</keyword>
<keyword id="KW-1185">Reference proteome</keyword>
<organism>
    <name type="scientific">Escherichia coli (strain K12)</name>
    <dbReference type="NCBI Taxonomy" id="83333"/>
    <lineage>
        <taxon>Bacteria</taxon>
        <taxon>Pseudomonadati</taxon>
        <taxon>Pseudomonadota</taxon>
        <taxon>Gammaproteobacteria</taxon>
        <taxon>Enterobacterales</taxon>
        <taxon>Enterobacteriaceae</taxon>
        <taxon>Escherichia</taxon>
    </lineage>
</organism>